<name>RS5_THENN</name>
<evidence type="ECO:0000255" key="1">
    <source>
        <dbReference type="HAMAP-Rule" id="MF_01307"/>
    </source>
</evidence>
<evidence type="ECO:0000305" key="2"/>
<dbReference type="EMBL" id="CP000916">
    <property type="protein sequence ID" value="ACM23186.1"/>
    <property type="molecule type" value="Genomic_DNA"/>
</dbReference>
<dbReference type="SMR" id="B9K8A3"/>
<dbReference type="STRING" id="309803.CTN_1010"/>
<dbReference type="KEGG" id="tna:CTN_1010"/>
<dbReference type="eggNOG" id="COG0098">
    <property type="taxonomic scope" value="Bacteria"/>
</dbReference>
<dbReference type="HOGENOM" id="CLU_065898_2_2_0"/>
<dbReference type="Proteomes" id="UP000000445">
    <property type="component" value="Chromosome"/>
</dbReference>
<dbReference type="GO" id="GO:0015935">
    <property type="term" value="C:small ribosomal subunit"/>
    <property type="evidence" value="ECO:0007669"/>
    <property type="project" value="InterPro"/>
</dbReference>
<dbReference type="GO" id="GO:0019843">
    <property type="term" value="F:rRNA binding"/>
    <property type="evidence" value="ECO:0007669"/>
    <property type="project" value="UniProtKB-UniRule"/>
</dbReference>
<dbReference type="GO" id="GO:0003735">
    <property type="term" value="F:structural constituent of ribosome"/>
    <property type="evidence" value="ECO:0007669"/>
    <property type="project" value="InterPro"/>
</dbReference>
<dbReference type="GO" id="GO:0006412">
    <property type="term" value="P:translation"/>
    <property type="evidence" value="ECO:0007669"/>
    <property type="project" value="UniProtKB-UniRule"/>
</dbReference>
<dbReference type="FunFam" id="3.30.160.20:FF:000001">
    <property type="entry name" value="30S ribosomal protein S5"/>
    <property type="match status" value="1"/>
</dbReference>
<dbReference type="FunFam" id="3.30.230.10:FF:000002">
    <property type="entry name" value="30S ribosomal protein S5"/>
    <property type="match status" value="1"/>
</dbReference>
<dbReference type="Gene3D" id="3.30.160.20">
    <property type="match status" value="1"/>
</dbReference>
<dbReference type="Gene3D" id="3.30.230.10">
    <property type="match status" value="1"/>
</dbReference>
<dbReference type="HAMAP" id="MF_01307_B">
    <property type="entry name" value="Ribosomal_uS5_B"/>
    <property type="match status" value="1"/>
</dbReference>
<dbReference type="InterPro" id="IPR020568">
    <property type="entry name" value="Ribosomal_Su5_D2-typ_SF"/>
</dbReference>
<dbReference type="InterPro" id="IPR000851">
    <property type="entry name" value="Ribosomal_uS5"/>
</dbReference>
<dbReference type="InterPro" id="IPR005712">
    <property type="entry name" value="Ribosomal_uS5_bac-type"/>
</dbReference>
<dbReference type="InterPro" id="IPR005324">
    <property type="entry name" value="Ribosomal_uS5_C"/>
</dbReference>
<dbReference type="InterPro" id="IPR013810">
    <property type="entry name" value="Ribosomal_uS5_N"/>
</dbReference>
<dbReference type="InterPro" id="IPR018192">
    <property type="entry name" value="Ribosomal_uS5_N_CS"/>
</dbReference>
<dbReference type="InterPro" id="IPR014721">
    <property type="entry name" value="Ribsml_uS5_D2-typ_fold_subgr"/>
</dbReference>
<dbReference type="NCBIfam" id="TIGR01021">
    <property type="entry name" value="rpsE_bact"/>
    <property type="match status" value="1"/>
</dbReference>
<dbReference type="PANTHER" id="PTHR48277">
    <property type="entry name" value="MITOCHONDRIAL RIBOSOMAL PROTEIN S5"/>
    <property type="match status" value="1"/>
</dbReference>
<dbReference type="PANTHER" id="PTHR48277:SF1">
    <property type="entry name" value="MITOCHONDRIAL RIBOSOMAL PROTEIN S5"/>
    <property type="match status" value="1"/>
</dbReference>
<dbReference type="Pfam" id="PF00333">
    <property type="entry name" value="Ribosomal_S5"/>
    <property type="match status" value="1"/>
</dbReference>
<dbReference type="Pfam" id="PF03719">
    <property type="entry name" value="Ribosomal_S5_C"/>
    <property type="match status" value="1"/>
</dbReference>
<dbReference type="SUPFAM" id="SSF54768">
    <property type="entry name" value="dsRNA-binding domain-like"/>
    <property type="match status" value="1"/>
</dbReference>
<dbReference type="SUPFAM" id="SSF54211">
    <property type="entry name" value="Ribosomal protein S5 domain 2-like"/>
    <property type="match status" value="1"/>
</dbReference>
<dbReference type="PROSITE" id="PS00585">
    <property type="entry name" value="RIBOSOMAL_S5"/>
    <property type="match status" value="1"/>
</dbReference>
<dbReference type="PROSITE" id="PS50881">
    <property type="entry name" value="S5_DSRBD"/>
    <property type="match status" value="1"/>
</dbReference>
<protein>
    <recommendedName>
        <fullName evidence="1">Small ribosomal subunit protein uS5</fullName>
    </recommendedName>
    <alternativeName>
        <fullName evidence="2">30S ribosomal protein S5</fullName>
    </alternativeName>
</protein>
<keyword id="KW-0687">Ribonucleoprotein</keyword>
<keyword id="KW-0689">Ribosomal protein</keyword>
<keyword id="KW-0694">RNA-binding</keyword>
<keyword id="KW-0699">rRNA-binding</keyword>
<comment type="function">
    <text evidence="1">With S4 and S12 plays an important role in translational accuracy.</text>
</comment>
<comment type="function">
    <text evidence="1">Located at the back of the 30S subunit body where it stabilizes the conformation of the head with respect to the body.</text>
</comment>
<comment type="subunit">
    <text evidence="1">Part of the 30S ribosomal subunit. Contacts proteins S4 and S8.</text>
</comment>
<comment type="domain">
    <text>The N-terminal domain interacts with the head of the 30S subunit; the C-terminal domain interacts with the body and contacts protein S4. The interaction surface between S4 and S5 is involved in control of translational fidelity.</text>
</comment>
<comment type="similarity">
    <text evidence="1">Belongs to the universal ribosomal protein uS5 family.</text>
</comment>
<feature type="chain" id="PRO_1000165466" description="Small ribosomal subunit protein uS5">
    <location>
        <begin position="1"/>
        <end position="178"/>
    </location>
</feature>
<feature type="domain" description="S5 DRBM" evidence="1">
    <location>
        <begin position="15"/>
        <end position="78"/>
    </location>
</feature>
<accession>B9K8A3</accession>
<reference key="1">
    <citation type="submission" date="2007-11" db="EMBL/GenBank/DDBJ databases">
        <title>The genome sequence of the hyperthermophilic bacterium Thermotoga neapolitana.</title>
        <authorList>
            <person name="Lim S.K."/>
            <person name="Kim J.S."/>
            <person name="Cha S.H."/>
            <person name="Park B.C."/>
            <person name="Lee D.S."/>
            <person name="Tae H.S."/>
            <person name="Kim S.-J."/>
            <person name="Kim J.J."/>
            <person name="Park K.J."/>
            <person name="Lee S.Y."/>
        </authorList>
    </citation>
    <scope>NUCLEOTIDE SEQUENCE [LARGE SCALE GENOMIC DNA]</scope>
    <source>
        <strain>ATCC 49049 / DSM 4359 / NBRC 107923 / NS-E</strain>
    </source>
</reference>
<sequence>METQEVMREIQYEEFEEKIIEIRRTSKVTKGGKNLSFRVVAIVGNKNGKVGLGIGKAREVPEAIRKAIADAKKNVIEVPVINGTIPHEVIGRQDASRVLLKPAAPGTGIIAGGTVRAVVELAGIQNILTKALGSTNPLNLAMATINGLKELLDPRKVAKLRDITVEEVYRGVRREGNA</sequence>
<proteinExistence type="inferred from homology"/>
<gene>
    <name evidence="1" type="primary">rpsE</name>
    <name type="ordered locus">CTN_1010</name>
</gene>
<organism>
    <name type="scientific">Thermotoga neapolitana (strain ATCC 49049 / DSM 4359 / NBRC 107923 / NS-E)</name>
    <dbReference type="NCBI Taxonomy" id="309803"/>
    <lineage>
        <taxon>Bacteria</taxon>
        <taxon>Thermotogati</taxon>
        <taxon>Thermotogota</taxon>
        <taxon>Thermotogae</taxon>
        <taxon>Thermotogales</taxon>
        <taxon>Thermotogaceae</taxon>
        <taxon>Thermotoga</taxon>
    </lineage>
</organism>